<comment type="subunit">
    <text evidence="1">Part of the 50S ribosomal subunit. Contacts protein L32.</text>
</comment>
<comment type="similarity">
    <text evidence="1">Belongs to the bacterial ribosomal protein bL17 family.</text>
</comment>
<organism>
    <name type="scientific">Campylobacter jejuni subsp. doylei (strain ATCC BAA-1458 / RM4099 / 269.97)</name>
    <dbReference type="NCBI Taxonomy" id="360109"/>
    <lineage>
        <taxon>Bacteria</taxon>
        <taxon>Pseudomonadati</taxon>
        <taxon>Campylobacterota</taxon>
        <taxon>Epsilonproteobacteria</taxon>
        <taxon>Campylobacterales</taxon>
        <taxon>Campylobacteraceae</taxon>
        <taxon>Campylobacter</taxon>
    </lineage>
</organism>
<reference key="1">
    <citation type="submission" date="2007-07" db="EMBL/GenBank/DDBJ databases">
        <title>Complete genome sequence of Campylobacter jejuni subsp doylei 269.97 isolated from human blood.</title>
        <authorList>
            <person name="Fouts D.E."/>
            <person name="Mongodin E.F."/>
            <person name="Puiu D."/>
            <person name="Sebastian Y."/>
            <person name="Miller W.G."/>
            <person name="Mandrell R.E."/>
            <person name="Lastovica A.J."/>
            <person name="Nelson K.E."/>
        </authorList>
    </citation>
    <scope>NUCLEOTIDE SEQUENCE [LARGE SCALE GENOMIC DNA]</scope>
    <source>
        <strain>ATCC BAA-1458 / RM4099 / 269.97</strain>
    </source>
</reference>
<protein>
    <recommendedName>
        <fullName evidence="1">Large ribosomal subunit protein bL17</fullName>
    </recommendedName>
    <alternativeName>
        <fullName evidence="2">50S ribosomal protein L17</fullName>
    </alternativeName>
</protein>
<feature type="chain" id="PRO_1000055791" description="Large ribosomal subunit protein bL17">
    <location>
        <begin position="1"/>
        <end position="117"/>
    </location>
</feature>
<sequence length="117" mass="13233">MRHKHGYRKLGRTSSHRAALLKNLTIALVNSGKIETTLPKAKELRAYVERLITRARLGDFNAHRAVFASLQNKNATNKLVTEIAPKFKDRNGGYTKIIKTRIRRGDAAEMAFIEFVA</sequence>
<name>RL17_CAMJD</name>
<proteinExistence type="inferred from homology"/>
<gene>
    <name evidence="1" type="primary">rplQ</name>
    <name type="ordered locus">JJD26997_1949</name>
</gene>
<keyword id="KW-0687">Ribonucleoprotein</keyword>
<keyword id="KW-0689">Ribosomal protein</keyword>
<accession>A7H5U6</accession>
<dbReference type="EMBL" id="CP000768">
    <property type="protein sequence ID" value="ABS43987.1"/>
    <property type="molecule type" value="Genomic_DNA"/>
</dbReference>
<dbReference type="SMR" id="A7H5U6"/>
<dbReference type="KEGG" id="cjd:JJD26997_1949"/>
<dbReference type="HOGENOM" id="CLU_074407_2_0_7"/>
<dbReference type="Proteomes" id="UP000002302">
    <property type="component" value="Chromosome"/>
</dbReference>
<dbReference type="GO" id="GO:0022625">
    <property type="term" value="C:cytosolic large ribosomal subunit"/>
    <property type="evidence" value="ECO:0007669"/>
    <property type="project" value="TreeGrafter"/>
</dbReference>
<dbReference type="GO" id="GO:0003735">
    <property type="term" value="F:structural constituent of ribosome"/>
    <property type="evidence" value="ECO:0007669"/>
    <property type="project" value="InterPro"/>
</dbReference>
<dbReference type="GO" id="GO:0006412">
    <property type="term" value="P:translation"/>
    <property type="evidence" value="ECO:0007669"/>
    <property type="project" value="UniProtKB-UniRule"/>
</dbReference>
<dbReference type="FunFam" id="3.90.1030.10:FF:000003">
    <property type="entry name" value="50S ribosomal protein L17"/>
    <property type="match status" value="1"/>
</dbReference>
<dbReference type="Gene3D" id="3.90.1030.10">
    <property type="entry name" value="Ribosomal protein L17"/>
    <property type="match status" value="1"/>
</dbReference>
<dbReference type="HAMAP" id="MF_01368">
    <property type="entry name" value="Ribosomal_bL17"/>
    <property type="match status" value="1"/>
</dbReference>
<dbReference type="InterPro" id="IPR000456">
    <property type="entry name" value="Ribosomal_bL17"/>
</dbReference>
<dbReference type="InterPro" id="IPR047859">
    <property type="entry name" value="Ribosomal_bL17_CS"/>
</dbReference>
<dbReference type="InterPro" id="IPR036373">
    <property type="entry name" value="Ribosomal_bL17_sf"/>
</dbReference>
<dbReference type="NCBIfam" id="TIGR00059">
    <property type="entry name" value="L17"/>
    <property type="match status" value="1"/>
</dbReference>
<dbReference type="PANTHER" id="PTHR14413:SF16">
    <property type="entry name" value="LARGE RIBOSOMAL SUBUNIT PROTEIN BL17M"/>
    <property type="match status" value="1"/>
</dbReference>
<dbReference type="PANTHER" id="PTHR14413">
    <property type="entry name" value="RIBOSOMAL PROTEIN L17"/>
    <property type="match status" value="1"/>
</dbReference>
<dbReference type="Pfam" id="PF01196">
    <property type="entry name" value="Ribosomal_L17"/>
    <property type="match status" value="1"/>
</dbReference>
<dbReference type="SUPFAM" id="SSF64263">
    <property type="entry name" value="Prokaryotic ribosomal protein L17"/>
    <property type="match status" value="1"/>
</dbReference>
<dbReference type="PROSITE" id="PS01167">
    <property type="entry name" value="RIBOSOMAL_L17"/>
    <property type="match status" value="1"/>
</dbReference>
<evidence type="ECO:0000255" key="1">
    <source>
        <dbReference type="HAMAP-Rule" id="MF_01368"/>
    </source>
</evidence>
<evidence type="ECO:0000305" key="2"/>